<name>PDER_ECOLI</name>
<comment type="function">
    <text evidence="4 6">Part of a signaling cascade that regulates curli biosynthesis. The cascade is composed of two cyclic-di-GMP (c-di-GMP) control modules, in which c-di-GMP controlled by the DgcE/PdeH pair (module I) regulates the activity of the DgcM/PdeR pair (module II), which in turn regulates activity of the transcription factor MlrA and expression of the master biofilm regulator csgD (PubMed:23708798). PdeR acts as a trigger enzyme that connects modules I and II. It inhibits DgcM and MlrA by direct interaction. Inhibition is relieved when PdeR binds and degrades c-di-GMP generated by module I (PubMed:17010156, PubMed:23708798).</text>
</comment>
<comment type="catalytic activity">
    <reaction evidence="4 6">
        <text>3',3'-c-di-GMP + H2O = 5'-phosphoguanylyl(3'-&gt;5')guanosine + H(+)</text>
        <dbReference type="Rhea" id="RHEA:24902"/>
        <dbReference type="ChEBI" id="CHEBI:15377"/>
        <dbReference type="ChEBI" id="CHEBI:15378"/>
        <dbReference type="ChEBI" id="CHEBI:58754"/>
        <dbReference type="ChEBI" id="CHEBI:58805"/>
        <dbReference type="EC" id="3.1.4.52"/>
    </reaction>
</comment>
<comment type="subunit">
    <text evidence="6">Interacts with DgcM and MlrA.</text>
</comment>
<comment type="interaction">
    <interactant intactId="EBI-548149">
        <id>P77334</id>
    </interactant>
    <interactant intactId="EBI-544662">
        <id>P77302</id>
        <label>dgcM</label>
    </interactant>
    <organismsDiffer>false</organismsDiffer>
    <experiments>5</experiments>
</comment>
<comment type="interaction">
    <interactant intactId="EBI-548149">
        <id>P77334</id>
    </interactant>
    <interactant intactId="EBI-1127668">
        <id>P33358</id>
        <label>mlrA</label>
    </interactant>
    <organismsDiffer>false</organismsDiffer>
    <experiments>2</experiments>
</comment>
<comment type="induction">
    <text evidence="4 5">Constitutively expressed at both 28 and 37 degrees Celsius, during transition into stationary phase, more highly expressed on plates than in liquid medium. Expression is RpoS dependent and repressed by H-NS.</text>
</comment>
<comment type="disruption phenotype">
    <text evidence="4">Leads to overproduction of curli fimbrae and autoaggregation in cultures grown at 28 degrees Celsius.</text>
</comment>
<comment type="sequence caution" evidence="8">
    <conflict type="frameshift">
        <sequence resource="EMBL" id="L40788"/>
    </conflict>
</comment>
<dbReference type="EC" id="3.1.4.52" evidence="4 6"/>
<dbReference type="EMBL" id="U00096">
    <property type="protein sequence ID" value="AAC74367.1"/>
    <property type="molecule type" value="Genomic_DNA"/>
</dbReference>
<dbReference type="EMBL" id="AP009048">
    <property type="protein sequence ID" value="BAA14839.1"/>
    <property type="molecule type" value="Genomic_DNA"/>
</dbReference>
<dbReference type="EMBL" id="L40788">
    <property type="status" value="NOT_ANNOTATED_CDS"/>
    <property type="molecule type" value="Genomic_DNA"/>
</dbReference>
<dbReference type="PIR" id="H64876">
    <property type="entry name" value="H64876"/>
</dbReference>
<dbReference type="RefSeq" id="NP_415801.1">
    <property type="nucleotide sequence ID" value="NC_000913.3"/>
</dbReference>
<dbReference type="RefSeq" id="WP_000859945.1">
    <property type="nucleotide sequence ID" value="NZ_SSZK01000012.1"/>
</dbReference>
<dbReference type="SMR" id="P77334"/>
<dbReference type="BioGRID" id="4261961">
    <property type="interactions" value="50"/>
</dbReference>
<dbReference type="DIP" id="DIP-11590N"/>
<dbReference type="FunCoup" id="P77334">
    <property type="interactions" value="414"/>
</dbReference>
<dbReference type="IntAct" id="P77334">
    <property type="interactions" value="6"/>
</dbReference>
<dbReference type="MINT" id="P77334"/>
<dbReference type="STRING" id="511145.b1285"/>
<dbReference type="jPOST" id="P77334"/>
<dbReference type="PaxDb" id="511145-b1285"/>
<dbReference type="DNASU" id="945868"/>
<dbReference type="EnsemblBacteria" id="AAC74367">
    <property type="protein sequence ID" value="AAC74367"/>
    <property type="gene ID" value="b1285"/>
</dbReference>
<dbReference type="GeneID" id="945868"/>
<dbReference type="KEGG" id="ecj:JW1278"/>
<dbReference type="KEGG" id="eco:b1285"/>
<dbReference type="KEGG" id="ecoc:C3026_07545"/>
<dbReference type="PATRIC" id="fig|1411691.4.peg.994"/>
<dbReference type="EchoBASE" id="EB3191"/>
<dbReference type="eggNOG" id="COG5001">
    <property type="taxonomic scope" value="Bacteria"/>
</dbReference>
<dbReference type="HOGENOM" id="CLU_000445_70_50_6"/>
<dbReference type="InParanoid" id="P77334"/>
<dbReference type="OMA" id="YPQWQTI"/>
<dbReference type="OrthoDB" id="9804951at2"/>
<dbReference type="PhylomeDB" id="P77334"/>
<dbReference type="BioCyc" id="EcoCyc:G6639-MONOMER"/>
<dbReference type="BioCyc" id="MetaCyc:G6639-MONOMER"/>
<dbReference type="PRO" id="PR:P77334"/>
<dbReference type="Proteomes" id="UP000000625">
    <property type="component" value="Chromosome"/>
</dbReference>
<dbReference type="GO" id="GO:0071111">
    <property type="term" value="F:cyclic-guanylate-specific phosphodiesterase activity"/>
    <property type="evidence" value="ECO:0000314"/>
    <property type="project" value="EcoCyc"/>
</dbReference>
<dbReference type="GO" id="GO:0005525">
    <property type="term" value="F:GTP binding"/>
    <property type="evidence" value="ECO:0000314"/>
    <property type="project" value="EcoCyc"/>
</dbReference>
<dbReference type="GO" id="GO:0010608">
    <property type="term" value="P:post-transcriptional regulation of gene expression"/>
    <property type="evidence" value="ECO:0000315"/>
    <property type="project" value="EcoCyc"/>
</dbReference>
<dbReference type="CDD" id="cd01948">
    <property type="entry name" value="EAL"/>
    <property type="match status" value="1"/>
</dbReference>
<dbReference type="CDD" id="cd01949">
    <property type="entry name" value="GGDEF"/>
    <property type="match status" value="1"/>
</dbReference>
<dbReference type="CDD" id="cd00130">
    <property type="entry name" value="PAS"/>
    <property type="match status" value="1"/>
</dbReference>
<dbReference type="FunFam" id="3.20.20.450:FF:000001">
    <property type="entry name" value="Cyclic di-GMP phosphodiesterase yahA"/>
    <property type="match status" value="1"/>
</dbReference>
<dbReference type="Gene3D" id="3.30.70.270">
    <property type="match status" value="1"/>
</dbReference>
<dbReference type="Gene3D" id="3.20.20.450">
    <property type="entry name" value="EAL domain"/>
    <property type="match status" value="1"/>
</dbReference>
<dbReference type="Gene3D" id="3.30.450.20">
    <property type="entry name" value="PAS domain"/>
    <property type="match status" value="1"/>
</dbReference>
<dbReference type="InterPro" id="IPR052155">
    <property type="entry name" value="Biofilm_reg_signaling"/>
</dbReference>
<dbReference type="InterPro" id="IPR001633">
    <property type="entry name" value="EAL_dom"/>
</dbReference>
<dbReference type="InterPro" id="IPR035919">
    <property type="entry name" value="EAL_sf"/>
</dbReference>
<dbReference type="InterPro" id="IPR000160">
    <property type="entry name" value="GGDEF_dom"/>
</dbReference>
<dbReference type="InterPro" id="IPR029787">
    <property type="entry name" value="Nucleotide_cyclase"/>
</dbReference>
<dbReference type="InterPro" id="IPR000014">
    <property type="entry name" value="PAS"/>
</dbReference>
<dbReference type="InterPro" id="IPR035965">
    <property type="entry name" value="PAS-like_dom_sf"/>
</dbReference>
<dbReference type="InterPro" id="IPR043128">
    <property type="entry name" value="Rev_trsase/Diguanyl_cyclase"/>
</dbReference>
<dbReference type="NCBIfam" id="TIGR00254">
    <property type="entry name" value="GGDEF"/>
    <property type="match status" value="1"/>
</dbReference>
<dbReference type="NCBIfam" id="NF007474">
    <property type="entry name" value="PRK10060.1"/>
    <property type="match status" value="1"/>
</dbReference>
<dbReference type="NCBIfam" id="TIGR00229">
    <property type="entry name" value="sensory_box"/>
    <property type="match status" value="1"/>
</dbReference>
<dbReference type="PANTHER" id="PTHR44757:SF11">
    <property type="entry name" value="CYCLIC DI-GMP PHOSPHODIESTERASE PDER"/>
    <property type="match status" value="1"/>
</dbReference>
<dbReference type="PANTHER" id="PTHR44757">
    <property type="entry name" value="DIGUANYLATE CYCLASE DGCP"/>
    <property type="match status" value="1"/>
</dbReference>
<dbReference type="Pfam" id="PF00563">
    <property type="entry name" value="EAL"/>
    <property type="match status" value="1"/>
</dbReference>
<dbReference type="Pfam" id="PF00990">
    <property type="entry name" value="GGDEF"/>
    <property type="match status" value="1"/>
</dbReference>
<dbReference type="Pfam" id="PF13426">
    <property type="entry name" value="PAS_9"/>
    <property type="match status" value="1"/>
</dbReference>
<dbReference type="SMART" id="SM00052">
    <property type="entry name" value="EAL"/>
    <property type="match status" value="1"/>
</dbReference>
<dbReference type="SMART" id="SM00267">
    <property type="entry name" value="GGDEF"/>
    <property type="match status" value="1"/>
</dbReference>
<dbReference type="SMART" id="SM00091">
    <property type="entry name" value="PAS"/>
    <property type="match status" value="1"/>
</dbReference>
<dbReference type="SUPFAM" id="SSF141868">
    <property type="entry name" value="EAL domain-like"/>
    <property type="match status" value="1"/>
</dbReference>
<dbReference type="SUPFAM" id="SSF55073">
    <property type="entry name" value="Nucleotide cyclase"/>
    <property type="match status" value="1"/>
</dbReference>
<dbReference type="SUPFAM" id="SSF55785">
    <property type="entry name" value="PYP-like sensor domain (PAS domain)"/>
    <property type="match status" value="1"/>
</dbReference>
<dbReference type="PROSITE" id="PS50883">
    <property type="entry name" value="EAL"/>
    <property type="match status" value="1"/>
</dbReference>
<dbReference type="PROSITE" id="PS50887">
    <property type="entry name" value="GGDEF"/>
    <property type="match status" value="1"/>
</dbReference>
<dbReference type="PROSITE" id="PS50112">
    <property type="entry name" value="PAS"/>
    <property type="match status" value="1"/>
</dbReference>
<proteinExistence type="evidence at protein level"/>
<gene>
    <name evidence="7" type="primary">pdeR</name>
    <name type="synonym">gmr</name>
    <name type="synonym">yciR</name>
    <name type="ordered locus">b1285</name>
    <name type="ordered locus">JW1278</name>
</gene>
<organism>
    <name type="scientific">Escherichia coli (strain K12)</name>
    <dbReference type="NCBI Taxonomy" id="83333"/>
    <lineage>
        <taxon>Bacteria</taxon>
        <taxon>Pseudomonadati</taxon>
        <taxon>Pseudomonadota</taxon>
        <taxon>Gammaproteobacteria</taxon>
        <taxon>Enterobacterales</taxon>
        <taxon>Enterobacteriaceae</taxon>
        <taxon>Escherichia</taxon>
    </lineage>
</organism>
<evidence type="ECO:0000255" key="1">
    <source>
        <dbReference type="PROSITE-ProRule" id="PRU00074"/>
    </source>
</evidence>
<evidence type="ECO:0000255" key="2">
    <source>
        <dbReference type="PROSITE-ProRule" id="PRU00095"/>
    </source>
</evidence>
<evidence type="ECO:0000255" key="3">
    <source>
        <dbReference type="PROSITE-ProRule" id="PRU00140"/>
    </source>
</evidence>
<evidence type="ECO:0000269" key="4">
    <source>
    </source>
</evidence>
<evidence type="ECO:0000269" key="5">
    <source>
    </source>
</evidence>
<evidence type="ECO:0000269" key="6">
    <source>
    </source>
</evidence>
<evidence type="ECO:0000303" key="7">
    <source>
    </source>
</evidence>
<evidence type="ECO:0000305" key="8"/>
<sequence>MKTVRESTTLYNFLGSHNPYWRLTESSDVLRFSTTETTEPDRTLQLSAEQAARIREMTVITSSLMMSLTVDESDLSVHLVGRKINKREWAGNASAWHDTPAVARDLSHGLSFAEQVVSEAHSAIVILDSRGNIQRFNRLCEDYTGLKEHDVIGQSVFKLFMSRREAAASRRNNRVFFRSGNAYEVELWIPTCKGQRLFLFRNKFVHSGSGKNEIFLICSGTDITEERRAQERLRILANTDSITGLPNRNAMQDLIDHAINHADNNKVGVVYLDLDNFKKVNDAYGHLFGDQLLRDVSLAILSCLEHDQVLARPGGDEFLVLASNTSQSALEAMASRILTRLRLPFRIGLIEVYTSCSVGIALSPEHGSDSTAIIRHADTAMYTAKEGGRGQFCVFTPEMNQRVFEYLWLDTNLRKALENDQLVIHYQPKITWRGEVRSLEALVRWQSPERGLIPPLDFISYAEESGLIVPLGRWVILDVVRQVAKWRDKGINLRVAVNISARQLADQTIFTALKQVLQELNFEYCPIDVELTESCLIENDELALSVIQQFSQLGAQVHLDDFGTGYSSLSQLARFPIDAIKLDQVFVRDIHKQPVSQSLVRAIVAVAQALNLQVIAEGVESAKEDAFLTKNGINERQGFLFAKPMPAVAFERWYKRYLKRA</sequence>
<protein>
    <recommendedName>
        <fullName evidence="8">Cyclic di-GMP phosphodiesterase PdeR</fullName>
        <ecNumber evidence="4 6">3.1.4.52</ecNumber>
    </recommendedName>
</protein>
<accession>P77334</accession>
<keyword id="KW-0973">c-di-GMP</keyword>
<keyword id="KW-0378">Hydrolase</keyword>
<keyword id="KW-1185">Reference proteome</keyword>
<reference key="1">
    <citation type="journal article" date="1996" name="DNA Res.">
        <title>A 570-kb DNA sequence of the Escherichia coli K-12 genome corresponding to the 28.0-40.1 min region on the linkage map.</title>
        <authorList>
            <person name="Aiba H."/>
            <person name="Baba T."/>
            <person name="Fujita K."/>
            <person name="Hayashi K."/>
            <person name="Inada T."/>
            <person name="Isono K."/>
            <person name="Itoh T."/>
            <person name="Kasai H."/>
            <person name="Kashimoto K."/>
            <person name="Kimura S."/>
            <person name="Kitakawa M."/>
            <person name="Kitagawa M."/>
            <person name="Makino K."/>
            <person name="Miki T."/>
            <person name="Mizobuchi K."/>
            <person name="Mori H."/>
            <person name="Mori T."/>
            <person name="Motomura K."/>
            <person name="Nakade S."/>
            <person name="Nakamura Y."/>
            <person name="Nashimoto H."/>
            <person name="Nishio Y."/>
            <person name="Oshima T."/>
            <person name="Saito N."/>
            <person name="Sampei G."/>
            <person name="Seki Y."/>
            <person name="Sivasundaram S."/>
            <person name="Tagami H."/>
            <person name="Takeda J."/>
            <person name="Takemoto K."/>
            <person name="Takeuchi Y."/>
            <person name="Wada C."/>
            <person name="Yamamoto Y."/>
            <person name="Horiuchi T."/>
        </authorList>
    </citation>
    <scope>NUCLEOTIDE SEQUENCE [LARGE SCALE GENOMIC DNA]</scope>
    <source>
        <strain>K12 / W3110 / ATCC 27325 / DSM 5911</strain>
    </source>
</reference>
<reference key="2">
    <citation type="journal article" date="1997" name="Science">
        <title>The complete genome sequence of Escherichia coli K-12.</title>
        <authorList>
            <person name="Blattner F.R."/>
            <person name="Plunkett G. III"/>
            <person name="Bloch C.A."/>
            <person name="Perna N.T."/>
            <person name="Burland V."/>
            <person name="Riley M."/>
            <person name="Collado-Vides J."/>
            <person name="Glasner J.D."/>
            <person name="Rode C.K."/>
            <person name="Mayhew G.F."/>
            <person name="Gregor J."/>
            <person name="Davis N.W."/>
            <person name="Kirkpatrick H.A."/>
            <person name="Goeden M.A."/>
            <person name="Rose D.J."/>
            <person name="Mau B."/>
            <person name="Shao Y."/>
        </authorList>
    </citation>
    <scope>NUCLEOTIDE SEQUENCE [LARGE SCALE GENOMIC DNA]</scope>
    <source>
        <strain>K12 / MG1655 / ATCC 47076</strain>
    </source>
</reference>
<reference key="3">
    <citation type="journal article" date="2006" name="Mol. Syst. Biol.">
        <title>Highly accurate genome sequences of Escherichia coli K-12 strains MG1655 and W3110.</title>
        <authorList>
            <person name="Hayashi K."/>
            <person name="Morooka N."/>
            <person name="Yamamoto Y."/>
            <person name="Fujita K."/>
            <person name="Isono K."/>
            <person name="Choi S."/>
            <person name="Ohtsubo E."/>
            <person name="Baba T."/>
            <person name="Wanner B.L."/>
            <person name="Mori H."/>
            <person name="Horiuchi T."/>
        </authorList>
    </citation>
    <scope>NUCLEOTIDE SEQUENCE [LARGE SCALE GENOMIC DNA]</scope>
    <source>
        <strain>K12 / W3110 / ATCC 27325 / DSM 5911</strain>
    </source>
</reference>
<reference key="4">
    <citation type="submission" date="1996-02" db="EMBL/GenBank/DDBJ databases">
        <authorList>
            <person name="Rita Z.R."/>
            <person name="Arraiano C.A."/>
        </authorList>
    </citation>
    <scope>NUCLEOTIDE SEQUENCE [GENOMIC DNA] OF 1-557</scope>
</reference>
<reference key="5">
    <citation type="journal article" date="2006" name="Mol. Microbiol.">
        <title>Cyclic-di-GMP-mediated signalling within the sigma network of Escherichia coli.</title>
        <authorList>
            <person name="Weber H."/>
            <person name="Pesavento C."/>
            <person name="Possling A."/>
            <person name="Tischendorf G."/>
            <person name="Hengge R."/>
        </authorList>
    </citation>
    <scope>FUNCTION</scope>
    <scope>CATALYTIC ACTIVITY</scope>
    <scope>INDUCTION</scope>
    <scope>RPOS-DEPENDENCE</scope>
    <scope>H-NS-REPRESSION</scope>
    <scope>DISRUPTION PHENOTYPE</scope>
    <source>
        <strain>K12 / MC4100</strain>
    </source>
</reference>
<reference key="6">
    <citation type="journal article" date="2009" name="Microbiology">
        <title>Gene expression patterns and differential input into curli fimbriae regulation of all GGDEF/EAL domain proteins in Escherichia coli.</title>
        <authorList>
            <person name="Sommerfeldt N."/>
            <person name="Possling A."/>
            <person name="Becker G."/>
            <person name="Pesavento C."/>
            <person name="Tschowri N."/>
            <person name="Hengge R."/>
        </authorList>
    </citation>
    <scope>INDUCTION</scope>
    <scope>RPOS-DEPENDENCE</scope>
    <source>
        <strain>K12 / W3110 / ATCC 27325 / DSM 5911</strain>
    </source>
</reference>
<reference key="7">
    <citation type="journal article" date="2013" name="EMBO J.">
        <title>The EAL domain protein YciR acts as a trigger enzyme in a c-di-GMP signalling cascade in E. coli biofilm control.</title>
        <authorList>
            <person name="Lindenberg S."/>
            <person name="Klauck G."/>
            <person name="Pesavento C."/>
            <person name="Klauck E."/>
            <person name="Hengge R."/>
        </authorList>
    </citation>
    <scope>FUNCTION</scope>
    <scope>CATALYTIC ACTIVITY</scope>
    <scope>INTERACTION WITH DGCM AND MLRA</scope>
</reference>
<reference key="8">
    <citation type="journal article" date="2015" name="J. Bacteriol.">
        <title>Systematic nomenclature for GGDEF and EAL domain-containing cyclic di-GMP turnover proteins of Escherichia coli.</title>
        <authorList>
            <person name="Hengge R."/>
            <person name="Galperin M.Y."/>
            <person name="Ghigo J.M."/>
            <person name="Gomelsky M."/>
            <person name="Green J."/>
            <person name="Hughes K.T."/>
            <person name="Jenal U."/>
            <person name="Landini P."/>
        </authorList>
    </citation>
    <scope>NOMENCLATURE</scope>
</reference>
<feature type="chain" id="PRO_0000168885" description="Cyclic di-GMP phosphodiesterase PdeR">
    <location>
        <begin position="1"/>
        <end position="661"/>
    </location>
</feature>
<feature type="domain" description="PAS" evidence="3">
    <location>
        <begin position="109"/>
        <end position="179"/>
    </location>
</feature>
<feature type="domain" description="GGDEF" evidence="2">
    <location>
        <begin position="265"/>
        <end position="397"/>
    </location>
</feature>
<feature type="domain" description="EAL" evidence="1">
    <location>
        <begin position="406"/>
        <end position="658"/>
    </location>
</feature>
<feature type="sequence conflict" description="In Ref. 4; L40788." evidence="8" ref="4">
    <original>V</original>
    <variation>L</variation>
    <location>
        <position position="4"/>
    </location>
</feature>
<feature type="sequence conflict" description="In Ref. 4; L40788." evidence="8" ref="4">
    <original>A</original>
    <variation>P</variation>
    <location>
        <position position="113"/>
    </location>
</feature>
<feature type="sequence conflict" description="In Ref. 4; L40788." evidence="8" ref="4">
    <original>V</original>
    <variation>L</variation>
    <location>
        <position position="175"/>
    </location>
</feature>
<feature type="sequence conflict" description="In Ref. 4; L40788." evidence="8" ref="4">
    <original>D</original>
    <variation>H</variation>
    <location>
        <position position="256"/>
    </location>
</feature>
<feature type="sequence conflict" description="In Ref. 4; L40788." evidence="8" ref="4">
    <original>P</original>
    <variation>G</variation>
    <location>
        <position position="344"/>
    </location>
</feature>